<feature type="initiator methionine" description="Removed" evidence="2">
    <location>
        <position position="1"/>
    </location>
</feature>
<feature type="chain" id="PRO_0000247957" description="PEST proteolytic signal-containing nuclear protein">
    <location>
        <begin position="2"/>
        <end position="178"/>
    </location>
</feature>
<feature type="region of interest" description="Disordered" evidence="3">
    <location>
        <begin position="1"/>
        <end position="84"/>
    </location>
</feature>
<feature type="region of interest" description="Disordered" evidence="3">
    <location>
        <begin position="134"/>
        <end position="178"/>
    </location>
</feature>
<feature type="compositionally biased region" description="Basic and acidic residues" evidence="3">
    <location>
        <begin position="1"/>
        <end position="15"/>
    </location>
</feature>
<feature type="compositionally biased region" description="Low complexity" evidence="3">
    <location>
        <begin position="37"/>
        <end position="47"/>
    </location>
</feature>
<feature type="compositionally biased region" description="Polar residues" evidence="3">
    <location>
        <begin position="139"/>
        <end position="149"/>
    </location>
</feature>
<feature type="compositionally biased region" description="Basic and acidic residues" evidence="3">
    <location>
        <begin position="160"/>
        <end position="178"/>
    </location>
</feature>
<feature type="modified residue" description="N-acetylalanine" evidence="2">
    <location>
        <position position="2"/>
    </location>
</feature>
<feature type="modified residue" description="Phosphoserine" evidence="2">
    <location>
        <position position="53"/>
    </location>
</feature>
<feature type="modified residue" description="N6-acetyllysine" evidence="2">
    <location>
        <position position="64"/>
    </location>
</feature>
<feature type="modified residue" description="Phosphoserine" evidence="2">
    <location>
        <position position="77"/>
    </location>
</feature>
<feature type="modified residue" description="Phosphoserine" evidence="2">
    <location>
        <position position="87"/>
    </location>
</feature>
<feature type="modified residue" description="Phosphoserine" evidence="2">
    <location>
        <position position="119"/>
    </location>
</feature>
<feature type="modified residue" description="Phosphothreonine" evidence="2">
    <location>
        <position position="139"/>
    </location>
</feature>
<feature type="modified residue" description="Phosphoserine" evidence="2">
    <location>
        <position position="147"/>
    </location>
</feature>
<feature type="modified residue" description="N6-acetyllysine" evidence="2">
    <location>
        <position position="150"/>
    </location>
</feature>
<feature type="modified residue" description="N6-acetyllysine" evidence="2">
    <location>
        <position position="152"/>
    </location>
</feature>
<sequence>MADGKAGEEKPEKPQRAGAAGGPEEEAEKPVKTKTVSSSNGGENSSRSAEKRSAEDETADLPTKPTKISKFGFAIGSQTTKKASAISIKLGSSKPKEPVPTLAPKTLSVAAAFNEDEDSEPEEMPPEAKMRMKNIGRDTPTSAGPNSFNKGKHGFSDNQKLWERNIKSHLGNVHDQDN</sequence>
<proteinExistence type="evidence at transcript level"/>
<reference key="1">
    <citation type="submission" date="2005-10" db="EMBL/GenBank/DDBJ databases">
        <authorList>
            <consortium name="NIH - Mammalian Gene Collection (MGC) project"/>
        </authorList>
    </citation>
    <scope>NUCLEOTIDE SEQUENCE [LARGE SCALE MRNA]</scope>
    <source>
        <strain>Hereford</strain>
        <tissue>Uterus</tissue>
    </source>
</reference>
<dbReference type="EMBL" id="BC108137">
    <property type="protein sequence ID" value="AAI08138.1"/>
    <property type="molecule type" value="mRNA"/>
</dbReference>
<dbReference type="RefSeq" id="NP_001033294.1">
    <property type="nucleotide sequence ID" value="NM_001038205.1"/>
</dbReference>
<dbReference type="FunCoup" id="Q32PF3">
    <property type="interactions" value="2530"/>
</dbReference>
<dbReference type="STRING" id="9913.ENSBTAP00000017901"/>
<dbReference type="iPTMnet" id="Q32PF3"/>
<dbReference type="PaxDb" id="9913-ENSBTAP00000017901"/>
<dbReference type="PeptideAtlas" id="Q32PF3"/>
<dbReference type="GeneID" id="615197"/>
<dbReference type="KEGG" id="bta:615197"/>
<dbReference type="CTD" id="57092"/>
<dbReference type="eggNOG" id="ENOG502QWEZ">
    <property type="taxonomic scope" value="Eukaryota"/>
</dbReference>
<dbReference type="HOGENOM" id="CLU_118645_1_0_1"/>
<dbReference type="InParanoid" id="Q32PF3"/>
<dbReference type="OrthoDB" id="10068198at2759"/>
<dbReference type="TreeFam" id="TF333058"/>
<dbReference type="Proteomes" id="UP000009136">
    <property type="component" value="Unplaced"/>
</dbReference>
<dbReference type="GO" id="GO:0005634">
    <property type="term" value="C:nucleus"/>
    <property type="evidence" value="ECO:0000318"/>
    <property type="project" value="GO_Central"/>
</dbReference>
<dbReference type="GO" id="GO:0043161">
    <property type="term" value="P:proteasome-mediated ubiquitin-dependent protein catabolic process"/>
    <property type="evidence" value="ECO:0000318"/>
    <property type="project" value="GO_Central"/>
</dbReference>
<dbReference type="GO" id="GO:0016567">
    <property type="term" value="P:protein ubiquitination"/>
    <property type="evidence" value="ECO:0000318"/>
    <property type="project" value="GO_Central"/>
</dbReference>
<dbReference type="InterPro" id="IPR029169">
    <property type="entry name" value="PCNP"/>
</dbReference>
<dbReference type="PANTHER" id="PTHR16523">
    <property type="entry name" value="PEST PROTEOLYTIC SIGNAL-CONTAINING NUCLEAR PROTEIN"/>
    <property type="match status" value="1"/>
</dbReference>
<dbReference type="PANTHER" id="PTHR16523:SF6">
    <property type="entry name" value="PEST PROTEOLYTIC SIGNAL-CONTAINING NUCLEAR PROTEIN"/>
    <property type="match status" value="1"/>
</dbReference>
<dbReference type="Pfam" id="PF15473">
    <property type="entry name" value="PCNP"/>
    <property type="match status" value="1"/>
</dbReference>
<evidence type="ECO:0000250" key="1"/>
<evidence type="ECO:0000250" key="2">
    <source>
        <dbReference type="UniProtKB" id="Q8WW12"/>
    </source>
</evidence>
<evidence type="ECO:0000256" key="3">
    <source>
        <dbReference type="SAM" id="MobiDB-lite"/>
    </source>
</evidence>
<accession>Q32PF3</accession>
<keyword id="KW-0007">Acetylation</keyword>
<keyword id="KW-0131">Cell cycle</keyword>
<keyword id="KW-0539">Nucleus</keyword>
<keyword id="KW-0597">Phosphoprotein</keyword>
<keyword id="KW-1185">Reference proteome</keyword>
<keyword id="KW-0832">Ubl conjugation</keyword>
<protein>
    <recommendedName>
        <fullName>PEST proteolytic signal-containing nuclear protein</fullName>
        <shortName>PCNP</shortName>
        <shortName>PEST-containing nuclear protein</shortName>
    </recommendedName>
</protein>
<gene>
    <name type="primary">PCNP</name>
</gene>
<organism>
    <name type="scientific">Bos taurus</name>
    <name type="common">Bovine</name>
    <dbReference type="NCBI Taxonomy" id="9913"/>
    <lineage>
        <taxon>Eukaryota</taxon>
        <taxon>Metazoa</taxon>
        <taxon>Chordata</taxon>
        <taxon>Craniata</taxon>
        <taxon>Vertebrata</taxon>
        <taxon>Euteleostomi</taxon>
        <taxon>Mammalia</taxon>
        <taxon>Eutheria</taxon>
        <taxon>Laurasiatheria</taxon>
        <taxon>Artiodactyla</taxon>
        <taxon>Ruminantia</taxon>
        <taxon>Pecora</taxon>
        <taxon>Bovidae</taxon>
        <taxon>Bovinae</taxon>
        <taxon>Bos</taxon>
    </lineage>
</organism>
<name>PCNP_BOVIN</name>
<comment type="function">
    <text evidence="1">May be involved in cell cycle regulation.</text>
</comment>
<comment type="subunit">
    <text evidence="1">Interacts with UHRF2/NIRF.</text>
</comment>
<comment type="subcellular location">
    <subcellularLocation>
        <location evidence="1">Nucleus</location>
    </subcellularLocation>
</comment>
<comment type="PTM">
    <text evidence="1">Ubiquitinated; mediated by UHRF2 and leading to its subsequent proteasomal degradation.</text>
</comment>
<comment type="PTM">
    <text evidence="1">N-terminally acetylated in a HYPK-dependent manner by the NatA acetyltransferase complex which is composed of NAA10 and NAA15.</text>
</comment>